<evidence type="ECO:0000255" key="1">
    <source>
        <dbReference type="HAMAP-Rule" id="MF_00211"/>
    </source>
</evidence>
<evidence type="ECO:0000256" key="2">
    <source>
        <dbReference type="SAM" id="MobiDB-lite"/>
    </source>
</evidence>
<evidence type="ECO:0000305" key="3"/>
<protein>
    <recommendedName>
        <fullName evidence="1">Anthranilate phosphoribosyltransferase</fullName>
        <ecNumber evidence="1">2.4.2.18</ecNumber>
    </recommendedName>
</protein>
<organism>
    <name type="scientific">Mycobacterium tuberculosis (strain CDC 1551 / Oshkosh)</name>
    <dbReference type="NCBI Taxonomy" id="83331"/>
    <lineage>
        <taxon>Bacteria</taxon>
        <taxon>Bacillati</taxon>
        <taxon>Actinomycetota</taxon>
        <taxon>Actinomycetes</taxon>
        <taxon>Mycobacteriales</taxon>
        <taxon>Mycobacteriaceae</taxon>
        <taxon>Mycobacterium</taxon>
        <taxon>Mycobacterium tuberculosis complex</taxon>
    </lineage>
</organism>
<accession>P9WFX4</accession>
<accession>L0T8W2</accession>
<accession>P66992</accession>
<accession>Q10382</accession>
<keyword id="KW-0028">Amino-acid biosynthesis</keyword>
<keyword id="KW-0057">Aromatic amino acid biosynthesis</keyword>
<keyword id="KW-0328">Glycosyltransferase</keyword>
<keyword id="KW-0460">Magnesium</keyword>
<keyword id="KW-0479">Metal-binding</keyword>
<keyword id="KW-1185">Reference proteome</keyword>
<keyword id="KW-0808">Transferase</keyword>
<keyword id="KW-0822">Tryptophan biosynthesis</keyword>
<sequence length="370" mass="37740">MALSAEGSSGGSRGGSPKAEAASVPSWPQILGRLTDNRDLARGQAAWAMDQIMTGNARPAQIAAFAVAMTMKAPTADEVGELAGVMLSHAHPLPADTVPDDAVDVVGTGGDGVNTVNLSTMAAIVVAAAGVPVVKHGNRAASSLSGGADTLEALGVRIDLGPDLVARSLAEVGIGFCFAPRFHPSYRHAAAVRREIGVPTVFNLLGPLTNPARPRAGLIGCAFADLAEVMAGVFAARRSSVLVVHGDDGLDELTTTTTSTIWRVAAGSVDKLTFDPAGFGFARAQLDQLAGGDAQANAAAVRAVLGGARGPVRDAVVLNAAGAIVAHAGLSSRAEWLPAWEEGLRRASAAIDTGAAEQLLARWVRFGRQI</sequence>
<feature type="chain" id="PRO_0000428461" description="Anthranilate phosphoribosyltransferase">
    <location>
        <begin position="1"/>
        <end position="370"/>
    </location>
</feature>
<feature type="region of interest" description="Disordered" evidence="2">
    <location>
        <begin position="1"/>
        <end position="27"/>
    </location>
</feature>
<feature type="binding site" evidence="1">
    <location>
        <position position="107"/>
    </location>
    <ligand>
        <name>5-phospho-alpha-D-ribose 1-diphosphate</name>
        <dbReference type="ChEBI" id="CHEBI:58017"/>
    </ligand>
</feature>
<feature type="binding site" evidence="1">
    <location>
        <position position="107"/>
    </location>
    <ligand>
        <name>anthranilate</name>
        <dbReference type="ChEBI" id="CHEBI:16567"/>
        <label>1</label>
    </ligand>
</feature>
<feature type="binding site" evidence="1">
    <location>
        <begin position="110"/>
        <end position="111"/>
    </location>
    <ligand>
        <name>5-phospho-alpha-D-ribose 1-diphosphate</name>
        <dbReference type="ChEBI" id="CHEBI:58017"/>
    </ligand>
</feature>
<feature type="binding site" evidence="1">
    <location>
        <position position="115"/>
    </location>
    <ligand>
        <name>5-phospho-alpha-D-ribose 1-diphosphate</name>
        <dbReference type="ChEBI" id="CHEBI:58017"/>
    </ligand>
</feature>
<feature type="binding site" evidence="1">
    <location>
        <begin position="117"/>
        <end position="120"/>
    </location>
    <ligand>
        <name>5-phospho-alpha-D-ribose 1-diphosphate</name>
        <dbReference type="ChEBI" id="CHEBI:58017"/>
    </ligand>
</feature>
<feature type="binding site" evidence="1">
    <location>
        <position position="119"/>
    </location>
    <ligand>
        <name>Mg(2+)</name>
        <dbReference type="ChEBI" id="CHEBI:18420"/>
        <label>1</label>
    </ligand>
</feature>
<feature type="binding site" evidence="1">
    <location>
        <begin position="135"/>
        <end position="143"/>
    </location>
    <ligand>
        <name>5-phospho-alpha-D-ribose 1-diphosphate</name>
        <dbReference type="ChEBI" id="CHEBI:58017"/>
    </ligand>
</feature>
<feature type="binding site" evidence="1">
    <location>
        <position position="138"/>
    </location>
    <ligand>
        <name>anthranilate</name>
        <dbReference type="ChEBI" id="CHEBI:16567"/>
        <label>1</label>
    </ligand>
</feature>
<feature type="binding site" evidence="1">
    <location>
        <position position="147"/>
    </location>
    <ligand>
        <name>5-phospho-alpha-D-ribose 1-diphosphate</name>
        <dbReference type="ChEBI" id="CHEBI:58017"/>
    </ligand>
</feature>
<feature type="binding site" evidence="1">
    <location>
        <position position="193"/>
    </location>
    <ligand>
        <name>anthranilate</name>
        <dbReference type="ChEBI" id="CHEBI:16567"/>
        <label>2</label>
    </ligand>
</feature>
<feature type="binding site" evidence="1">
    <location>
        <position position="251"/>
    </location>
    <ligand>
        <name>Mg(2+)</name>
        <dbReference type="ChEBI" id="CHEBI:18420"/>
        <label>2</label>
    </ligand>
</feature>
<feature type="binding site" evidence="1">
    <location>
        <position position="252"/>
    </location>
    <ligand>
        <name>Mg(2+)</name>
        <dbReference type="ChEBI" id="CHEBI:18420"/>
        <label>1</label>
    </ligand>
</feature>
<feature type="binding site" evidence="1">
    <location>
        <position position="252"/>
    </location>
    <ligand>
        <name>Mg(2+)</name>
        <dbReference type="ChEBI" id="CHEBI:18420"/>
        <label>2</label>
    </ligand>
</feature>
<reference key="1">
    <citation type="journal article" date="2002" name="J. Bacteriol.">
        <title>Whole-genome comparison of Mycobacterium tuberculosis clinical and laboratory strains.</title>
        <authorList>
            <person name="Fleischmann R.D."/>
            <person name="Alland D."/>
            <person name="Eisen J.A."/>
            <person name="Carpenter L."/>
            <person name="White O."/>
            <person name="Peterson J.D."/>
            <person name="DeBoy R.T."/>
            <person name="Dodson R.J."/>
            <person name="Gwinn M.L."/>
            <person name="Haft D.H."/>
            <person name="Hickey E.K."/>
            <person name="Kolonay J.F."/>
            <person name="Nelson W.C."/>
            <person name="Umayam L.A."/>
            <person name="Ermolaeva M.D."/>
            <person name="Salzberg S.L."/>
            <person name="Delcher A."/>
            <person name="Utterback T.R."/>
            <person name="Weidman J.F."/>
            <person name="Khouri H.M."/>
            <person name="Gill J."/>
            <person name="Mikula A."/>
            <person name="Bishai W."/>
            <person name="Jacobs W.R. Jr."/>
            <person name="Venter J.C."/>
            <person name="Fraser C.M."/>
        </authorList>
    </citation>
    <scope>NUCLEOTIDE SEQUENCE [LARGE SCALE GENOMIC DNA]</scope>
    <source>
        <strain>CDC 1551 / Oshkosh</strain>
    </source>
</reference>
<dbReference type="EC" id="2.4.2.18" evidence="1"/>
<dbReference type="EMBL" id="AE000516">
    <property type="protein sequence ID" value="AAK46534.1"/>
    <property type="status" value="ALT_INIT"/>
    <property type="molecule type" value="Genomic_DNA"/>
</dbReference>
<dbReference type="PIR" id="A70784">
    <property type="entry name" value="A70784"/>
</dbReference>
<dbReference type="RefSeq" id="WP_003411387.1">
    <property type="nucleotide sequence ID" value="NZ_KK341227.1"/>
</dbReference>
<dbReference type="SMR" id="P9WFX4"/>
<dbReference type="BindingDB" id="P9WFX4"/>
<dbReference type="GeneID" id="45427983"/>
<dbReference type="KEGG" id="mtc:MT2248"/>
<dbReference type="HOGENOM" id="CLU_034315_4_1_11"/>
<dbReference type="UniPathway" id="UPA00035">
    <property type="reaction ID" value="UER00041"/>
</dbReference>
<dbReference type="Proteomes" id="UP000001020">
    <property type="component" value="Chromosome"/>
</dbReference>
<dbReference type="GO" id="GO:0005829">
    <property type="term" value="C:cytosol"/>
    <property type="evidence" value="ECO:0007669"/>
    <property type="project" value="TreeGrafter"/>
</dbReference>
<dbReference type="GO" id="GO:0004048">
    <property type="term" value="F:anthranilate phosphoribosyltransferase activity"/>
    <property type="evidence" value="ECO:0007669"/>
    <property type="project" value="UniProtKB-UniRule"/>
</dbReference>
<dbReference type="GO" id="GO:0000287">
    <property type="term" value="F:magnesium ion binding"/>
    <property type="evidence" value="ECO:0007669"/>
    <property type="project" value="UniProtKB-UniRule"/>
</dbReference>
<dbReference type="GO" id="GO:0000162">
    <property type="term" value="P:L-tryptophan biosynthetic process"/>
    <property type="evidence" value="ECO:0007669"/>
    <property type="project" value="UniProtKB-UniRule"/>
</dbReference>
<dbReference type="FunFam" id="1.20.970.10:FF:000006">
    <property type="entry name" value="Anthranilate phosphoribosyltransferase"/>
    <property type="match status" value="1"/>
</dbReference>
<dbReference type="FunFam" id="3.40.1030.10:FF:000002">
    <property type="entry name" value="Anthranilate phosphoribosyltransferase"/>
    <property type="match status" value="1"/>
</dbReference>
<dbReference type="Gene3D" id="3.40.1030.10">
    <property type="entry name" value="Nucleoside phosphorylase/phosphoribosyltransferase catalytic domain"/>
    <property type="match status" value="1"/>
</dbReference>
<dbReference type="Gene3D" id="1.20.970.10">
    <property type="entry name" value="Transferase, Pyrimidine Nucleoside Phosphorylase, Chain C"/>
    <property type="match status" value="1"/>
</dbReference>
<dbReference type="HAMAP" id="MF_00211">
    <property type="entry name" value="TrpD"/>
    <property type="match status" value="1"/>
</dbReference>
<dbReference type="InterPro" id="IPR005940">
    <property type="entry name" value="Anthranilate_Pribosyl_Tfrase"/>
</dbReference>
<dbReference type="InterPro" id="IPR000312">
    <property type="entry name" value="Glycosyl_Trfase_fam3"/>
</dbReference>
<dbReference type="InterPro" id="IPR017459">
    <property type="entry name" value="Glycosyl_Trfase_fam3_N_dom"/>
</dbReference>
<dbReference type="InterPro" id="IPR036320">
    <property type="entry name" value="Glycosyl_Trfase_fam3_N_dom_sf"/>
</dbReference>
<dbReference type="InterPro" id="IPR035902">
    <property type="entry name" value="Nuc_phospho_transferase"/>
</dbReference>
<dbReference type="NCBIfam" id="TIGR01245">
    <property type="entry name" value="trpD"/>
    <property type="match status" value="1"/>
</dbReference>
<dbReference type="PANTHER" id="PTHR43285">
    <property type="entry name" value="ANTHRANILATE PHOSPHORIBOSYLTRANSFERASE"/>
    <property type="match status" value="1"/>
</dbReference>
<dbReference type="PANTHER" id="PTHR43285:SF2">
    <property type="entry name" value="ANTHRANILATE PHOSPHORIBOSYLTRANSFERASE"/>
    <property type="match status" value="1"/>
</dbReference>
<dbReference type="Pfam" id="PF02885">
    <property type="entry name" value="Glycos_trans_3N"/>
    <property type="match status" value="1"/>
</dbReference>
<dbReference type="Pfam" id="PF00591">
    <property type="entry name" value="Glycos_transf_3"/>
    <property type="match status" value="1"/>
</dbReference>
<dbReference type="SUPFAM" id="SSF52418">
    <property type="entry name" value="Nucleoside phosphorylase/phosphoribosyltransferase catalytic domain"/>
    <property type="match status" value="1"/>
</dbReference>
<dbReference type="SUPFAM" id="SSF47648">
    <property type="entry name" value="Nucleoside phosphorylase/phosphoribosyltransferase N-terminal domain"/>
    <property type="match status" value="1"/>
</dbReference>
<proteinExistence type="inferred from homology"/>
<gene>
    <name evidence="1" type="primary">trpD</name>
    <name type="ordered locus">MT2248</name>
</gene>
<name>TRPD_MYCTO</name>
<comment type="function">
    <text evidence="1">Catalyzes the transfer of the phosphoribosyl group of 5-phosphorylribose-1-pyrophosphate (PRPP) to anthranilate to yield N-(5'-phosphoribosyl)-anthranilate (PRA).</text>
</comment>
<comment type="catalytic activity">
    <reaction evidence="1">
        <text>N-(5-phospho-beta-D-ribosyl)anthranilate + diphosphate = 5-phospho-alpha-D-ribose 1-diphosphate + anthranilate</text>
        <dbReference type="Rhea" id="RHEA:11768"/>
        <dbReference type="ChEBI" id="CHEBI:16567"/>
        <dbReference type="ChEBI" id="CHEBI:18277"/>
        <dbReference type="ChEBI" id="CHEBI:33019"/>
        <dbReference type="ChEBI" id="CHEBI:58017"/>
        <dbReference type="EC" id="2.4.2.18"/>
    </reaction>
</comment>
<comment type="cofactor">
    <cofactor evidence="1">
        <name>Mg(2+)</name>
        <dbReference type="ChEBI" id="CHEBI:18420"/>
    </cofactor>
    <text evidence="1">Binds 2 magnesium ions per monomer.</text>
</comment>
<comment type="pathway">
    <text evidence="1">Amino-acid biosynthesis; L-tryptophan biosynthesis; L-tryptophan from chorismate: step 2/5.</text>
</comment>
<comment type="subunit">
    <text evidence="1">Homodimer.</text>
</comment>
<comment type="similarity">
    <text evidence="1">Belongs to the anthranilate phosphoribosyltransferase family.</text>
</comment>
<comment type="sequence caution" evidence="3">
    <conflict type="erroneous initiation">
        <sequence resource="EMBL-CDS" id="AAK46534"/>
    </conflict>
    <text>Truncated N-terminus.</text>
</comment>